<sequence length="178" mass="19389">MEKIKSTTILAVRRNGKTVIAGDGQVTLGSAVVKHTAKKIRVLNEGKVIVGFAGSAADGLALMERLEEKLNKYKGNLVKSAVELAKDWRLDKYLRRLEAVMIAADKNNMLLLSGNGDVIEPDEPVLAIGSGGDYARSAALALYRNTDLDARKIVEEAMKIAGEICIYTNQNFVIEEIE</sequence>
<gene>
    <name evidence="1" type="primary">hslV</name>
    <name type="ordered locus">SYO3AOP1_0829</name>
</gene>
<dbReference type="EC" id="3.4.25.2" evidence="1"/>
<dbReference type="EMBL" id="CP001080">
    <property type="protein sequence ID" value="ACD66462.1"/>
    <property type="molecule type" value="Genomic_DNA"/>
</dbReference>
<dbReference type="RefSeq" id="WP_012459536.1">
    <property type="nucleotide sequence ID" value="NC_010730.1"/>
</dbReference>
<dbReference type="SMR" id="B2V939"/>
<dbReference type="STRING" id="436114.SYO3AOP1_0829"/>
<dbReference type="KEGG" id="sul:SYO3AOP1_0829"/>
<dbReference type="eggNOG" id="COG5405">
    <property type="taxonomic scope" value="Bacteria"/>
</dbReference>
<dbReference type="HOGENOM" id="CLU_093872_1_0_0"/>
<dbReference type="GO" id="GO:0009376">
    <property type="term" value="C:HslUV protease complex"/>
    <property type="evidence" value="ECO:0007669"/>
    <property type="project" value="UniProtKB-UniRule"/>
</dbReference>
<dbReference type="GO" id="GO:0005839">
    <property type="term" value="C:proteasome core complex"/>
    <property type="evidence" value="ECO:0007669"/>
    <property type="project" value="InterPro"/>
</dbReference>
<dbReference type="GO" id="GO:0046872">
    <property type="term" value="F:metal ion binding"/>
    <property type="evidence" value="ECO:0007669"/>
    <property type="project" value="UniProtKB-KW"/>
</dbReference>
<dbReference type="GO" id="GO:0004298">
    <property type="term" value="F:threonine-type endopeptidase activity"/>
    <property type="evidence" value="ECO:0007669"/>
    <property type="project" value="UniProtKB-KW"/>
</dbReference>
<dbReference type="GO" id="GO:0051603">
    <property type="term" value="P:proteolysis involved in protein catabolic process"/>
    <property type="evidence" value="ECO:0007669"/>
    <property type="project" value="InterPro"/>
</dbReference>
<dbReference type="CDD" id="cd01913">
    <property type="entry name" value="protease_HslV"/>
    <property type="match status" value="1"/>
</dbReference>
<dbReference type="Gene3D" id="3.60.20.10">
    <property type="entry name" value="Glutamine Phosphoribosylpyrophosphate, subunit 1, domain 1"/>
    <property type="match status" value="1"/>
</dbReference>
<dbReference type="HAMAP" id="MF_00248">
    <property type="entry name" value="HslV"/>
    <property type="match status" value="1"/>
</dbReference>
<dbReference type="InterPro" id="IPR022281">
    <property type="entry name" value="ATP-dep_Prtase_HsIV_su"/>
</dbReference>
<dbReference type="InterPro" id="IPR029055">
    <property type="entry name" value="Ntn_hydrolases_N"/>
</dbReference>
<dbReference type="InterPro" id="IPR001353">
    <property type="entry name" value="Proteasome_sua/b"/>
</dbReference>
<dbReference type="InterPro" id="IPR023333">
    <property type="entry name" value="Proteasome_suB-type"/>
</dbReference>
<dbReference type="NCBIfam" id="TIGR03692">
    <property type="entry name" value="ATP_dep_HslV"/>
    <property type="match status" value="1"/>
</dbReference>
<dbReference type="NCBIfam" id="NF003964">
    <property type="entry name" value="PRK05456.1"/>
    <property type="match status" value="1"/>
</dbReference>
<dbReference type="PANTHER" id="PTHR32194:SF0">
    <property type="entry name" value="ATP-DEPENDENT PROTEASE SUBUNIT HSLV"/>
    <property type="match status" value="1"/>
</dbReference>
<dbReference type="PANTHER" id="PTHR32194">
    <property type="entry name" value="METALLOPROTEASE TLDD"/>
    <property type="match status" value="1"/>
</dbReference>
<dbReference type="Pfam" id="PF00227">
    <property type="entry name" value="Proteasome"/>
    <property type="match status" value="1"/>
</dbReference>
<dbReference type="PIRSF" id="PIRSF039093">
    <property type="entry name" value="HslV"/>
    <property type="match status" value="1"/>
</dbReference>
<dbReference type="SUPFAM" id="SSF56235">
    <property type="entry name" value="N-terminal nucleophile aminohydrolases (Ntn hydrolases)"/>
    <property type="match status" value="1"/>
</dbReference>
<dbReference type="PROSITE" id="PS51476">
    <property type="entry name" value="PROTEASOME_BETA_2"/>
    <property type="match status" value="1"/>
</dbReference>
<keyword id="KW-0021">Allosteric enzyme</keyword>
<keyword id="KW-0963">Cytoplasm</keyword>
<keyword id="KW-0378">Hydrolase</keyword>
<keyword id="KW-0479">Metal-binding</keyword>
<keyword id="KW-0645">Protease</keyword>
<keyword id="KW-0915">Sodium</keyword>
<keyword id="KW-0888">Threonine protease</keyword>
<accession>B2V939</accession>
<organism>
    <name type="scientific">Sulfurihydrogenibium sp. (strain YO3AOP1)</name>
    <dbReference type="NCBI Taxonomy" id="436114"/>
    <lineage>
        <taxon>Bacteria</taxon>
        <taxon>Pseudomonadati</taxon>
        <taxon>Aquificota</taxon>
        <taxon>Aquificia</taxon>
        <taxon>Aquificales</taxon>
        <taxon>Hydrogenothermaceae</taxon>
        <taxon>Sulfurihydrogenibium</taxon>
    </lineage>
</organism>
<feature type="chain" id="PRO_1000100920" description="ATP-dependent protease subunit HslV">
    <location>
        <begin position="1"/>
        <end position="178"/>
    </location>
</feature>
<feature type="active site" evidence="1">
    <location>
        <position position="7"/>
    </location>
</feature>
<feature type="binding site" evidence="1">
    <location>
        <position position="162"/>
    </location>
    <ligand>
        <name>Na(+)</name>
        <dbReference type="ChEBI" id="CHEBI:29101"/>
    </ligand>
</feature>
<feature type="binding site" evidence="1">
    <location>
        <position position="165"/>
    </location>
    <ligand>
        <name>Na(+)</name>
        <dbReference type="ChEBI" id="CHEBI:29101"/>
    </ligand>
</feature>
<feature type="binding site" evidence="1">
    <location>
        <position position="168"/>
    </location>
    <ligand>
        <name>Na(+)</name>
        <dbReference type="ChEBI" id="CHEBI:29101"/>
    </ligand>
</feature>
<evidence type="ECO:0000255" key="1">
    <source>
        <dbReference type="HAMAP-Rule" id="MF_00248"/>
    </source>
</evidence>
<proteinExistence type="inferred from homology"/>
<protein>
    <recommendedName>
        <fullName evidence="1">ATP-dependent protease subunit HslV</fullName>
        <ecNumber evidence="1">3.4.25.2</ecNumber>
    </recommendedName>
</protein>
<reference key="1">
    <citation type="journal article" date="2009" name="J. Bacteriol.">
        <title>Complete and draft genome sequences of six members of the Aquificales.</title>
        <authorList>
            <person name="Reysenbach A.-L."/>
            <person name="Hamamura N."/>
            <person name="Podar M."/>
            <person name="Griffiths E."/>
            <person name="Ferreira S."/>
            <person name="Hochstein R."/>
            <person name="Heidelberg J."/>
            <person name="Johnson J."/>
            <person name="Mead D."/>
            <person name="Pohorille A."/>
            <person name="Sarmiento M."/>
            <person name="Schweighofer K."/>
            <person name="Seshadri R."/>
            <person name="Voytek M.A."/>
        </authorList>
    </citation>
    <scope>NUCLEOTIDE SEQUENCE [LARGE SCALE GENOMIC DNA]</scope>
    <source>
        <strain>YO3AOP1</strain>
    </source>
</reference>
<name>HSLV_SULSY</name>
<comment type="function">
    <text evidence="1">Protease subunit of a proteasome-like degradation complex believed to be a general protein degrading machinery.</text>
</comment>
<comment type="catalytic activity">
    <reaction evidence="1">
        <text>ATP-dependent cleavage of peptide bonds with broad specificity.</text>
        <dbReference type="EC" id="3.4.25.2"/>
    </reaction>
</comment>
<comment type="activity regulation">
    <text evidence="1">Allosterically activated by HslU binding.</text>
</comment>
<comment type="subunit">
    <text evidence="1">A double ring-shaped homohexamer of HslV is capped on each side by a ring-shaped HslU homohexamer. The assembly of the HslU/HslV complex is dependent on binding of ATP.</text>
</comment>
<comment type="subcellular location">
    <subcellularLocation>
        <location evidence="1">Cytoplasm</location>
    </subcellularLocation>
</comment>
<comment type="similarity">
    <text evidence="1">Belongs to the peptidase T1B family. HslV subfamily.</text>
</comment>